<proteinExistence type="inferred from homology"/>
<feature type="chain" id="PRO_0000095265" description="Adenylosuccinate synthetase">
    <location>
        <begin position="1"/>
        <end position="430"/>
    </location>
</feature>
<feature type="active site" description="Proton acceptor" evidence="1">
    <location>
        <position position="14"/>
    </location>
</feature>
<feature type="active site" description="Proton donor" evidence="1">
    <location>
        <position position="42"/>
    </location>
</feature>
<feature type="binding site" evidence="1">
    <location>
        <begin position="13"/>
        <end position="19"/>
    </location>
    <ligand>
        <name>GTP</name>
        <dbReference type="ChEBI" id="CHEBI:37565"/>
    </ligand>
</feature>
<feature type="binding site" description="in other chain" evidence="1">
    <location>
        <begin position="14"/>
        <end position="17"/>
    </location>
    <ligand>
        <name>IMP</name>
        <dbReference type="ChEBI" id="CHEBI:58053"/>
        <note>ligand shared between dimeric partners</note>
    </ligand>
</feature>
<feature type="binding site" evidence="1">
    <location>
        <position position="14"/>
    </location>
    <ligand>
        <name>Mg(2+)</name>
        <dbReference type="ChEBI" id="CHEBI:18420"/>
    </ligand>
</feature>
<feature type="binding site" description="in other chain" evidence="1">
    <location>
        <begin position="39"/>
        <end position="42"/>
    </location>
    <ligand>
        <name>IMP</name>
        <dbReference type="ChEBI" id="CHEBI:58053"/>
        <note>ligand shared between dimeric partners</note>
    </ligand>
</feature>
<feature type="binding site" evidence="1">
    <location>
        <begin position="41"/>
        <end position="43"/>
    </location>
    <ligand>
        <name>GTP</name>
        <dbReference type="ChEBI" id="CHEBI:37565"/>
    </ligand>
</feature>
<feature type="binding site" evidence="1">
    <location>
        <position position="41"/>
    </location>
    <ligand>
        <name>Mg(2+)</name>
        <dbReference type="ChEBI" id="CHEBI:18420"/>
    </ligand>
</feature>
<feature type="binding site" description="in other chain" evidence="1">
    <location>
        <position position="130"/>
    </location>
    <ligand>
        <name>IMP</name>
        <dbReference type="ChEBI" id="CHEBI:58053"/>
        <note>ligand shared between dimeric partners</note>
    </ligand>
</feature>
<feature type="binding site" evidence="1">
    <location>
        <position position="144"/>
    </location>
    <ligand>
        <name>IMP</name>
        <dbReference type="ChEBI" id="CHEBI:58053"/>
        <note>ligand shared between dimeric partners</note>
    </ligand>
</feature>
<feature type="binding site" description="in other chain" evidence="1">
    <location>
        <position position="225"/>
    </location>
    <ligand>
        <name>IMP</name>
        <dbReference type="ChEBI" id="CHEBI:58053"/>
        <note>ligand shared between dimeric partners</note>
    </ligand>
</feature>
<feature type="binding site" description="in other chain" evidence="1">
    <location>
        <position position="240"/>
    </location>
    <ligand>
        <name>IMP</name>
        <dbReference type="ChEBI" id="CHEBI:58053"/>
        <note>ligand shared between dimeric partners</note>
    </ligand>
</feature>
<feature type="binding site" evidence="1">
    <location>
        <begin position="300"/>
        <end position="306"/>
    </location>
    <ligand>
        <name>substrate</name>
    </ligand>
</feature>
<feature type="binding site" description="in other chain" evidence="1">
    <location>
        <position position="304"/>
    </location>
    <ligand>
        <name>IMP</name>
        <dbReference type="ChEBI" id="CHEBI:58053"/>
        <note>ligand shared between dimeric partners</note>
    </ligand>
</feature>
<feature type="binding site" evidence="1">
    <location>
        <position position="306"/>
    </location>
    <ligand>
        <name>GTP</name>
        <dbReference type="ChEBI" id="CHEBI:37565"/>
    </ligand>
</feature>
<feature type="binding site" evidence="1">
    <location>
        <begin position="332"/>
        <end position="334"/>
    </location>
    <ligand>
        <name>GTP</name>
        <dbReference type="ChEBI" id="CHEBI:37565"/>
    </ligand>
</feature>
<feature type="binding site" evidence="1">
    <location>
        <begin position="414"/>
        <end position="416"/>
    </location>
    <ligand>
        <name>GTP</name>
        <dbReference type="ChEBI" id="CHEBI:37565"/>
    </ligand>
</feature>
<organism>
    <name type="scientific">Xylella fastidiosa (strain Temecula1 / ATCC 700964)</name>
    <dbReference type="NCBI Taxonomy" id="183190"/>
    <lineage>
        <taxon>Bacteria</taxon>
        <taxon>Pseudomonadati</taxon>
        <taxon>Pseudomonadota</taxon>
        <taxon>Gammaproteobacteria</taxon>
        <taxon>Lysobacterales</taxon>
        <taxon>Lysobacteraceae</taxon>
        <taxon>Xylella</taxon>
    </lineage>
</organism>
<comment type="function">
    <text evidence="1">Plays an important role in the de novo pathway of purine nucleotide biosynthesis. Catalyzes the first committed step in the biosynthesis of AMP from IMP.</text>
</comment>
<comment type="catalytic activity">
    <reaction evidence="1">
        <text>IMP + L-aspartate + GTP = N(6)-(1,2-dicarboxyethyl)-AMP + GDP + phosphate + 2 H(+)</text>
        <dbReference type="Rhea" id="RHEA:15753"/>
        <dbReference type="ChEBI" id="CHEBI:15378"/>
        <dbReference type="ChEBI" id="CHEBI:29991"/>
        <dbReference type="ChEBI" id="CHEBI:37565"/>
        <dbReference type="ChEBI" id="CHEBI:43474"/>
        <dbReference type="ChEBI" id="CHEBI:57567"/>
        <dbReference type="ChEBI" id="CHEBI:58053"/>
        <dbReference type="ChEBI" id="CHEBI:58189"/>
        <dbReference type="EC" id="6.3.4.4"/>
    </reaction>
</comment>
<comment type="cofactor">
    <cofactor evidence="1">
        <name>Mg(2+)</name>
        <dbReference type="ChEBI" id="CHEBI:18420"/>
    </cofactor>
    <text evidence="1">Binds 1 Mg(2+) ion per subunit.</text>
</comment>
<comment type="pathway">
    <text evidence="1">Purine metabolism; AMP biosynthesis via de novo pathway; AMP from IMP: step 1/2.</text>
</comment>
<comment type="subunit">
    <text evidence="1">Homodimer.</text>
</comment>
<comment type="subcellular location">
    <subcellularLocation>
        <location evidence="1">Cytoplasm</location>
    </subcellularLocation>
</comment>
<comment type="similarity">
    <text evidence="1">Belongs to the adenylosuccinate synthetase family.</text>
</comment>
<evidence type="ECO:0000255" key="1">
    <source>
        <dbReference type="HAMAP-Rule" id="MF_00011"/>
    </source>
</evidence>
<reference key="1">
    <citation type="journal article" date="2003" name="J. Bacteriol.">
        <title>Comparative analyses of the complete genome sequences of Pierce's disease and citrus variegated chlorosis strains of Xylella fastidiosa.</title>
        <authorList>
            <person name="Van Sluys M.A."/>
            <person name="de Oliveira M.C."/>
            <person name="Monteiro-Vitorello C.B."/>
            <person name="Miyaki C.Y."/>
            <person name="Furlan L.R."/>
            <person name="Camargo L.E.A."/>
            <person name="da Silva A.C.R."/>
            <person name="Moon D.H."/>
            <person name="Takita M.A."/>
            <person name="Lemos E.G.M."/>
            <person name="Machado M.A."/>
            <person name="Ferro M.I.T."/>
            <person name="da Silva F.R."/>
            <person name="Goldman M.H.S."/>
            <person name="Goldman G.H."/>
            <person name="Lemos M.V.F."/>
            <person name="El-Dorry H."/>
            <person name="Tsai S.M."/>
            <person name="Carrer H."/>
            <person name="Carraro D.M."/>
            <person name="de Oliveira R.C."/>
            <person name="Nunes L.R."/>
            <person name="Siqueira W.J."/>
            <person name="Coutinho L.L."/>
            <person name="Kimura E.T."/>
            <person name="Ferro E.S."/>
            <person name="Harakava R."/>
            <person name="Kuramae E.E."/>
            <person name="Marino C.L."/>
            <person name="Giglioti E."/>
            <person name="Abreu I.L."/>
            <person name="Alves L.M.C."/>
            <person name="do Amaral A.M."/>
            <person name="Baia G.S."/>
            <person name="Blanco S.R."/>
            <person name="Brito M.S."/>
            <person name="Cannavan F.S."/>
            <person name="Celestino A.V."/>
            <person name="da Cunha A.F."/>
            <person name="Fenille R.C."/>
            <person name="Ferro J.A."/>
            <person name="Formighieri E.F."/>
            <person name="Kishi L.T."/>
            <person name="Leoni S.G."/>
            <person name="Oliveira A.R."/>
            <person name="Rosa V.E. Jr."/>
            <person name="Sassaki F.T."/>
            <person name="Sena J.A.D."/>
            <person name="de Souza A.A."/>
            <person name="Truffi D."/>
            <person name="Tsukumo F."/>
            <person name="Yanai G.M."/>
            <person name="Zaros L.G."/>
            <person name="Civerolo E.L."/>
            <person name="Simpson A.J.G."/>
            <person name="Almeida N.F. Jr."/>
            <person name="Setubal J.C."/>
            <person name="Kitajima J.P."/>
        </authorList>
    </citation>
    <scope>NUCLEOTIDE SEQUENCE [LARGE SCALE GENOMIC DNA]</scope>
    <source>
        <strain>Temecula1 / ATCC 700964</strain>
    </source>
</reference>
<accession>Q87B33</accession>
<protein>
    <recommendedName>
        <fullName evidence="1">Adenylosuccinate synthetase</fullName>
        <shortName evidence="1">AMPSase</shortName>
        <shortName evidence="1">AdSS</shortName>
        <ecNumber evidence="1">6.3.4.4</ecNumber>
    </recommendedName>
    <alternativeName>
        <fullName evidence="1">IMP--aspartate ligase</fullName>
    </alternativeName>
</protein>
<dbReference type="EC" id="6.3.4.4" evidence="1"/>
<dbReference type="EMBL" id="AE009442">
    <property type="protein sequence ID" value="AAO29467.1"/>
    <property type="molecule type" value="Genomic_DNA"/>
</dbReference>
<dbReference type="RefSeq" id="WP_004089785.1">
    <property type="nucleotide sequence ID" value="NC_004556.1"/>
</dbReference>
<dbReference type="SMR" id="Q87B33"/>
<dbReference type="KEGG" id="xft:PD_1627"/>
<dbReference type="HOGENOM" id="CLU_029848_0_0_6"/>
<dbReference type="UniPathway" id="UPA00075">
    <property type="reaction ID" value="UER00335"/>
</dbReference>
<dbReference type="Proteomes" id="UP000002516">
    <property type="component" value="Chromosome"/>
</dbReference>
<dbReference type="GO" id="GO:0005737">
    <property type="term" value="C:cytoplasm"/>
    <property type="evidence" value="ECO:0007669"/>
    <property type="project" value="UniProtKB-SubCell"/>
</dbReference>
<dbReference type="GO" id="GO:0004019">
    <property type="term" value="F:adenylosuccinate synthase activity"/>
    <property type="evidence" value="ECO:0007669"/>
    <property type="project" value="UniProtKB-UniRule"/>
</dbReference>
<dbReference type="GO" id="GO:0005525">
    <property type="term" value="F:GTP binding"/>
    <property type="evidence" value="ECO:0007669"/>
    <property type="project" value="UniProtKB-UniRule"/>
</dbReference>
<dbReference type="GO" id="GO:0000287">
    <property type="term" value="F:magnesium ion binding"/>
    <property type="evidence" value="ECO:0007669"/>
    <property type="project" value="UniProtKB-UniRule"/>
</dbReference>
<dbReference type="GO" id="GO:0044208">
    <property type="term" value="P:'de novo' AMP biosynthetic process"/>
    <property type="evidence" value="ECO:0007669"/>
    <property type="project" value="UniProtKB-UniRule"/>
</dbReference>
<dbReference type="GO" id="GO:0046040">
    <property type="term" value="P:IMP metabolic process"/>
    <property type="evidence" value="ECO:0007669"/>
    <property type="project" value="TreeGrafter"/>
</dbReference>
<dbReference type="CDD" id="cd03108">
    <property type="entry name" value="AdSS"/>
    <property type="match status" value="1"/>
</dbReference>
<dbReference type="FunFam" id="1.10.300.10:FF:000001">
    <property type="entry name" value="Adenylosuccinate synthetase"/>
    <property type="match status" value="1"/>
</dbReference>
<dbReference type="FunFam" id="3.90.170.10:FF:000001">
    <property type="entry name" value="Adenylosuccinate synthetase"/>
    <property type="match status" value="1"/>
</dbReference>
<dbReference type="Gene3D" id="3.40.440.10">
    <property type="entry name" value="Adenylosuccinate Synthetase, subunit A, domain 1"/>
    <property type="match status" value="1"/>
</dbReference>
<dbReference type="Gene3D" id="1.10.300.10">
    <property type="entry name" value="Adenylosuccinate Synthetase, subunit A, domain 2"/>
    <property type="match status" value="1"/>
</dbReference>
<dbReference type="Gene3D" id="3.90.170.10">
    <property type="entry name" value="Adenylosuccinate Synthetase, subunit A, domain 3"/>
    <property type="match status" value="1"/>
</dbReference>
<dbReference type="HAMAP" id="MF_00011">
    <property type="entry name" value="Adenylosucc_synth"/>
    <property type="match status" value="1"/>
</dbReference>
<dbReference type="InterPro" id="IPR018220">
    <property type="entry name" value="Adenylosuccin_syn_GTP-bd"/>
</dbReference>
<dbReference type="InterPro" id="IPR033128">
    <property type="entry name" value="Adenylosuccin_syn_Lys_AS"/>
</dbReference>
<dbReference type="InterPro" id="IPR042109">
    <property type="entry name" value="Adenylosuccinate_synth_dom1"/>
</dbReference>
<dbReference type="InterPro" id="IPR042110">
    <property type="entry name" value="Adenylosuccinate_synth_dom2"/>
</dbReference>
<dbReference type="InterPro" id="IPR042111">
    <property type="entry name" value="Adenylosuccinate_synth_dom3"/>
</dbReference>
<dbReference type="InterPro" id="IPR001114">
    <property type="entry name" value="Adenylosuccinate_synthetase"/>
</dbReference>
<dbReference type="InterPro" id="IPR027417">
    <property type="entry name" value="P-loop_NTPase"/>
</dbReference>
<dbReference type="NCBIfam" id="NF002223">
    <property type="entry name" value="PRK01117.1"/>
    <property type="match status" value="1"/>
</dbReference>
<dbReference type="NCBIfam" id="TIGR00184">
    <property type="entry name" value="purA"/>
    <property type="match status" value="1"/>
</dbReference>
<dbReference type="PANTHER" id="PTHR11846">
    <property type="entry name" value="ADENYLOSUCCINATE SYNTHETASE"/>
    <property type="match status" value="1"/>
</dbReference>
<dbReference type="PANTHER" id="PTHR11846:SF0">
    <property type="entry name" value="ADENYLOSUCCINATE SYNTHETASE"/>
    <property type="match status" value="1"/>
</dbReference>
<dbReference type="Pfam" id="PF00709">
    <property type="entry name" value="Adenylsucc_synt"/>
    <property type="match status" value="1"/>
</dbReference>
<dbReference type="SMART" id="SM00788">
    <property type="entry name" value="Adenylsucc_synt"/>
    <property type="match status" value="1"/>
</dbReference>
<dbReference type="SUPFAM" id="SSF52540">
    <property type="entry name" value="P-loop containing nucleoside triphosphate hydrolases"/>
    <property type="match status" value="1"/>
</dbReference>
<dbReference type="PROSITE" id="PS01266">
    <property type="entry name" value="ADENYLOSUCCIN_SYN_1"/>
    <property type="match status" value="1"/>
</dbReference>
<dbReference type="PROSITE" id="PS00513">
    <property type="entry name" value="ADENYLOSUCCIN_SYN_2"/>
    <property type="match status" value="1"/>
</dbReference>
<keyword id="KW-0963">Cytoplasm</keyword>
<keyword id="KW-0342">GTP-binding</keyword>
<keyword id="KW-0436">Ligase</keyword>
<keyword id="KW-0460">Magnesium</keyword>
<keyword id="KW-0479">Metal-binding</keyword>
<keyword id="KW-0547">Nucleotide-binding</keyword>
<keyword id="KW-0658">Purine biosynthesis</keyword>
<keyword id="KW-1185">Reference proteome</keyword>
<sequence>MGQSVVVLGAQWGDEGKGKIVDLLTEEIGAVVRFQGGHNAGHTLVINAKKTVLHLIPSGILRNGVLCLIGNGVVISPAALRKEIEELEDTGLEIRSRLKISPAAPLIMEYHIALDQAREKAAGGRAIGTTGRGIGPAYEDKVGRRGIRVADLHYPDQLAEKLRAALDYHNFVLTRYFGVDGMDFQRIYDEMLVFAEYVEPMKSDVAGILHDLRKQGKRVLFEGAQGTLLDIDHGTYPYVTSSSTTVGGALSGAGVGVQDIDYVLGIAKAYATRVGGGPFPTELDDKIGQGIRDRGVEYGASTGRPRRCGWMDIVALKRAVAINGITGLCITKLDVLDGMDKLKICIAYEYHDKRSEYAPLDAQGWEECTPVYLEFPGWNESTHGITSWEKLPPAARAYLCALEELAGCPIGIVSTGPDREHTIMLHDPFA</sequence>
<name>PURA_XYLFT</name>
<gene>
    <name evidence="1" type="primary">purA</name>
    <name type="ordered locus">PD_1627</name>
</gene>